<organism>
    <name type="scientific">Staphylococcus epidermidis (strain ATCC 12228 / FDA PCI 1200)</name>
    <dbReference type="NCBI Taxonomy" id="176280"/>
    <lineage>
        <taxon>Bacteria</taxon>
        <taxon>Bacillati</taxon>
        <taxon>Bacillota</taxon>
        <taxon>Bacilli</taxon>
        <taxon>Bacillales</taxon>
        <taxon>Staphylococcaceae</taxon>
        <taxon>Staphylococcus</taxon>
    </lineage>
</organism>
<reference key="1">
    <citation type="journal article" date="2003" name="Mol. Microbiol.">
        <title>Genome-based analysis of virulence genes in a non-biofilm-forming Staphylococcus epidermidis strain (ATCC 12228).</title>
        <authorList>
            <person name="Zhang Y.-Q."/>
            <person name="Ren S.-X."/>
            <person name="Li H.-L."/>
            <person name="Wang Y.-X."/>
            <person name="Fu G."/>
            <person name="Yang J."/>
            <person name="Qin Z.-Q."/>
            <person name="Miao Y.-G."/>
            <person name="Wang W.-Y."/>
            <person name="Chen R.-S."/>
            <person name="Shen Y."/>
            <person name="Chen Z."/>
            <person name="Yuan Z.-H."/>
            <person name="Zhao G.-P."/>
            <person name="Qu D."/>
            <person name="Danchin A."/>
            <person name="Wen Y.-M."/>
        </authorList>
    </citation>
    <scope>NUCLEOTIDE SEQUENCE [LARGE SCALE GENOMIC DNA]</scope>
    <source>
        <strain>ATCC 12228 / FDA PCI 1200</strain>
    </source>
</reference>
<protein>
    <recommendedName>
        <fullName evidence="1">Transcription-repair-coupling factor</fullName>
        <shortName evidence="1">TRCF</shortName>
        <ecNumber evidence="1">3.6.4.-</ecNumber>
    </recommendedName>
</protein>
<sequence length="1169" mass="134745">MKSMIANYISEDNRFQELDEVFGQENILVTGLSPSAKATIIAEKYLKDHKQMLLVTNNLYQADKIETDILQYVDDSEVYKYPVQDIMTEEFSTQSPQLMSERVRTLTALAQGEKGLFIVPLNGFKKWLTPVDLWKDHQMTLKVGQDIDVDAFLNKLVNMGYRRESVVSHIGEFSLRGGIIDIYPLIGTPVRIELFDTEVDSIRDFDVETQRSNDNINQVEITTASDYIITDEVIQHLQNELKKAYEYTRPKIEKSVRNDLKETYESFKLFESTFFDHQLLRRLVSFMYEKPSTLIDYFQKNAIIVVDEFNRIKETEETLTTEVEDFMSNLIESGNGFIGQGFMKYESFDALLEQHAVAYFTLFTSSMQVPLQHIIKFSCKPVQQFYGQYDIMRSEFQRYVHQDYTVVVLVETETKVERIQSMLNEMHIPTVSNIHEDIDGGQVVVTEGSLSEGFELPYMQLVVITERELFKTRQKKQRKRTKTISNAEKIKSYQDLNVGDYIVHVHHGVGRYLGVETLEVGDTHRDYIKLQYKGTDQLFVPVDQMDQVQKYVASEDKSPRLNKLGGTEWKKTKAKVQQSVEDIADELIDLYKEREMSVGYQYGQDTAEQSAFEHDFPYELTPDQSKSIDEIKGDMERARPMDRLLCGDVGYGKTEVAVRAAFKAVMDGKQVAFLVPTTILAQQHYETLLERMQDFPVEIQLVSRFRTAKEIRETKEGLKSGYVDIVVGTHKLLGKDIQYKDLGLLIVDEEQRFGVRHKERIKTLKKNVDVLTLTATPIPRTLHMSMLGVRDLSVIETPPENRFPVQTYVLEQNTNFIKEALERELSRDGQVFYLYNKVQSIYEKREQLQRLMPDANIAVAHGQMTERDLEETMLSFINHEYDILVTTTIIETGVDVPNANTLIIEEADRFGLSQLYQLRGRVGRSSRIGYAYFLHPANKVLNETAEERLQTIKEFTELGSGFKIAMRDLNIRGAGNLLGKQQHGFIDSVGFDLYSQMLEEAVNEKRGIKEESPDAPDIEVELHLDAYLPAEYIQSEQAKIEIYKKLRKVETEEQLFDVKDELIDRFNDYPIEVERLLDIVEIKVHALHAGVELIKDKGKSIQIILSPKATEDINGEELFKQTQPLGRAMKVGVQNNAMNVTLTKSKQWLDSLKFLVRCIEESMAIKDED</sequence>
<feature type="chain" id="PRO_0000282676" description="Transcription-repair-coupling factor">
    <location>
        <begin position="1"/>
        <end position="1169"/>
    </location>
</feature>
<feature type="domain" description="Helicase ATP-binding" evidence="1">
    <location>
        <begin position="634"/>
        <end position="795"/>
    </location>
</feature>
<feature type="domain" description="Helicase C-terminal" evidence="1">
    <location>
        <begin position="809"/>
        <end position="970"/>
    </location>
</feature>
<feature type="short sequence motif" description="DEEQ box">
    <location>
        <begin position="748"/>
        <end position="751"/>
    </location>
</feature>
<feature type="binding site" evidence="1">
    <location>
        <begin position="647"/>
        <end position="654"/>
    </location>
    <ligand>
        <name>ATP</name>
        <dbReference type="ChEBI" id="CHEBI:30616"/>
    </ligand>
</feature>
<keyword id="KW-0067">ATP-binding</keyword>
<keyword id="KW-0963">Cytoplasm</keyword>
<keyword id="KW-0227">DNA damage</keyword>
<keyword id="KW-0234">DNA repair</keyword>
<keyword id="KW-0238">DNA-binding</keyword>
<keyword id="KW-0347">Helicase</keyword>
<keyword id="KW-0378">Hydrolase</keyword>
<keyword id="KW-0547">Nucleotide-binding</keyword>
<evidence type="ECO:0000255" key="1">
    <source>
        <dbReference type="HAMAP-Rule" id="MF_00969"/>
    </source>
</evidence>
<accession>Q8CMT1</accession>
<comment type="function">
    <text evidence="1">Couples transcription and DNA repair by recognizing RNA polymerase (RNAP) stalled at DNA lesions. Mediates ATP-dependent release of RNAP and its truncated transcript from the DNA, and recruitment of nucleotide excision repair machinery to the damaged site.</text>
</comment>
<comment type="subcellular location">
    <subcellularLocation>
        <location evidence="1">Cytoplasm</location>
    </subcellularLocation>
</comment>
<comment type="similarity">
    <text evidence="1">In the N-terminal section; belongs to the UvrB family.</text>
</comment>
<comment type="similarity">
    <text evidence="1">In the C-terminal section; belongs to the helicase family. RecG subfamily.</text>
</comment>
<gene>
    <name evidence="1" type="primary">mfd</name>
    <name type="ordered locus">SE_2280</name>
</gene>
<proteinExistence type="inferred from homology"/>
<dbReference type="EC" id="3.6.4.-" evidence="1"/>
<dbReference type="EMBL" id="AE015929">
    <property type="protein sequence ID" value="AAO05922.1"/>
    <property type="molecule type" value="Genomic_DNA"/>
</dbReference>
<dbReference type="RefSeq" id="NP_765835.1">
    <property type="nucleotide sequence ID" value="NC_004461.1"/>
</dbReference>
<dbReference type="SMR" id="Q8CMT1"/>
<dbReference type="KEGG" id="sep:SE_2280"/>
<dbReference type="PATRIC" id="fig|176280.10.peg.2223"/>
<dbReference type="eggNOG" id="COG1197">
    <property type="taxonomic scope" value="Bacteria"/>
</dbReference>
<dbReference type="HOGENOM" id="CLU_005122_1_3_9"/>
<dbReference type="OrthoDB" id="9804325at2"/>
<dbReference type="Proteomes" id="UP000001411">
    <property type="component" value="Chromosome"/>
</dbReference>
<dbReference type="GO" id="GO:0005737">
    <property type="term" value="C:cytoplasm"/>
    <property type="evidence" value="ECO:0007669"/>
    <property type="project" value="UniProtKB-SubCell"/>
</dbReference>
<dbReference type="GO" id="GO:0005524">
    <property type="term" value="F:ATP binding"/>
    <property type="evidence" value="ECO:0007669"/>
    <property type="project" value="UniProtKB-UniRule"/>
</dbReference>
<dbReference type="GO" id="GO:0003684">
    <property type="term" value="F:damaged DNA binding"/>
    <property type="evidence" value="ECO:0007669"/>
    <property type="project" value="InterPro"/>
</dbReference>
<dbReference type="GO" id="GO:0003678">
    <property type="term" value="F:DNA helicase activity"/>
    <property type="evidence" value="ECO:0007669"/>
    <property type="project" value="TreeGrafter"/>
</dbReference>
<dbReference type="GO" id="GO:0016787">
    <property type="term" value="F:hydrolase activity"/>
    <property type="evidence" value="ECO:0007669"/>
    <property type="project" value="UniProtKB-KW"/>
</dbReference>
<dbReference type="GO" id="GO:0006355">
    <property type="term" value="P:regulation of DNA-templated transcription"/>
    <property type="evidence" value="ECO:0007669"/>
    <property type="project" value="UniProtKB-UniRule"/>
</dbReference>
<dbReference type="GO" id="GO:0000716">
    <property type="term" value="P:transcription-coupled nucleotide-excision repair, DNA damage recognition"/>
    <property type="evidence" value="ECO:0007669"/>
    <property type="project" value="UniProtKB-UniRule"/>
</dbReference>
<dbReference type="CDD" id="cd17991">
    <property type="entry name" value="DEXHc_TRCF"/>
    <property type="match status" value="1"/>
</dbReference>
<dbReference type="FunFam" id="3.40.50.300:FF:000546">
    <property type="entry name" value="Transcription-repair-coupling factor"/>
    <property type="match status" value="1"/>
</dbReference>
<dbReference type="Gene3D" id="2.40.10.170">
    <property type="match status" value="1"/>
</dbReference>
<dbReference type="Gene3D" id="3.40.50.11180">
    <property type="match status" value="1"/>
</dbReference>
<dbReference type="Gene3D" id="3.40.50.300">
    <property type="entry name" value="P-loop containing nucleotide triphosphate hydrolases"/>
    <property type="match status" value="2"/>
</dbReference>
<dbReference type="Gene3D" id="3.30.2060.10">
    <property type="entry name" value="Penicillin-binding protein 1b domain"/>
    <property type="match status" value="1"/>
</dbReference>
<dbReference type="Gene3D" id="3.90.1150.50">
    <property type="entry name" value="Transcription-repair-coupling factor, D7 domain"/>
    <property type="match status" value="1"/>
</dbReference>
<dbReference type="HAMAP" id="MF_00969">
    <property type="entry name" value="TRCF"/>
    <property type="match status" value="1"/>
</dbReference>
<dbReference type="InterPro" id="IPR003711">
    <property type="entry name" value="CarD-like/TRCF_RID"/>
</dbReference>
<dbReference type="InterPro" id="IPR036101">
    <property type="entry name" value="CarD-like/TRCF_RID_sf"/>
</dbReference>
<dbReference type="InterPro" id="IPR011545">
    <property type="entry name" value="DEAD/DEAH_box_helicase_dom"/>
</dbReference>
<dbReference type="InterPro" id="IPR014001">
    <property type="entry name" value="Helicase_ATP-bd"/>
</dbReference>
<dbReference type="InterPro" id="IPR001650">
    <property type="entry name" value="Helicase_C-like"/>
</dbReference>
<dbReference type="InterPro" id="IPR004576">
    <property type="entry name" value="Mfd"/>
</dbReference>
<dbReference type="InterPro" id="IPR027417">
    <property type="entry name" value="P-loop_NTPase"/>
</dbReference>
<dbReference type="InterPro" id="IPR047112">
    <property type="entry name" value="RecG/Mfd"/>
</dbReference>
<dbReference type="InterPro" id="IPR037235">
    <property type="entry name" value="TRCF-like_C_D7"/>
</dbReference>
<dbReference type="InterPro" id="IPR005118">
    <property type="entry name" value="TRCF_C"/>
</dbReference>
<dbReference type="InterPro" id="IPR041471">
    <property type="entry name" value="UvrB_inter"/>
</dbReference>
<dbReference type="NCBIfam" id="TIGR00580">
    <property type="entry name" value="mfd"/>
    <property type="match status" value="1"/>
</dbReference>
<dbReference type="PANTHER" id="PTHR47964">
    <property type="entry name" value="ATP-DEPENDENT DNA HELICASE HOMOLOG RECG, CHLOROPLASTIC"/>
    <property type="match status" value="1"/>
</dbReference>
<dbReference type="PANTHER" id="PTHR47964:SF1">
    <property type="entry name" value="ATP-DEPENDENT DNA HELICASE HOMOLOG RECG, CHLOROPLASTIC"/>
    <property type="match status" value="1"/>
</dbReference>
<dbReference type="Pfam" id="PF02559">
    <property type="entry name" value="CarD_TRCF_RID"/>
    <property type="match status" value="1"/>
</dbReference>
<dbReference type="Pfam" id="PF00270">
    <property type="entry name" value="DEAD"/>
    <property type="match status" value="1"/>
</dbReference>
<dbReference type="Pfam" id="PF00271">
    <property type="entry name" value="Helicase_C"/>
    <property type="match status" value="1"/>
</dbReference>
<dbReference type="Pfam" id="PF03461">
    <property type="entry name" value="TRCF"/>
    <property type="match status" value="1"/>
</dbReference>
<dbReference type="Pfam" id="PF17757">
    <property type="entry name" value="UvrB_inter"/>
    <property type="match status" value="1"/>
</dbReference>
<dbReference type="SMART" id="SM01058">
    <property type="entry name" value="CarD_TRCF"/>
    <property type="match status" value="1"/>
</dbReference>
<dbReference type="SMART" id="SM00487">
    <property type="entry name" value="DEXDc"/>
    <property type="match status" value="1"/>
</dbReference>
<dbReference type="SMART" id="SM00490">
    <property type="entry name" value="HELICc"/>
    <property type="match status" value="1"/>
</dbReference>
<dbReference type="SMART" id="SM00982">
    <property type="entry name" value="TRCF"/>
    <property type="match status" value="1"/>
</dbReference>
<dbReference type="SUPFAM" id="SSF141259">
    <property type="entry name" value="CarD-like"/>
    <property type="match status" value="1"/>
</dbReference>
<dbReference type="SUPFAM" id="SSF52540">
    <property type="entry name" value="P-loop containing nucleoside triphosphate hydrolases"/>
    <property type="match status" value="4"/>
</dbReference>
<dbReference type="SUPFAM" id="SSF143517">
    <property type="entry name" value="TRCF domain-like"/>
    <property type="match status" value="1"/>
</dbReference>
<dbReference type="PROSITE" id="PS51192">
    <property type="entry name" value="HELICASE_ATP_BIND_1"/>
    <property type="match status" value="1"/>
</dbReference>
<dbReference type="PROSITE" id="PS51194">
    <property type="entry name" value="HELICASE_CTER"/>
    <property type="match status" value="1"/>
</dbReference>
<name>MFD_STAES</name>